<keyword id="KW-0067">ATP-binding</keyword>
<keyword id="KW-0418">Kinase</keyword>
<keyword id="KW-0460">Magnesium</keyword>
<keyword id="KW-0479">Metal-binding</keyword>
<keyword id="KW-0547">Nucleotide-binding</keyword>
<keyword id="KW-0597">Phosphoprotein</keyword>
<keyword id="KW-0808">Transferase</keyword>
<name>PPK1_MYCGI</name>
<accession>A4TE29</accession>
<feature type="chain" id="PRO_1000079365" description="Polyphosphate kinase">
    <location>
        <begin position="1"/>
        <end position="729"/>
    </location>
</feature>
<feature type="region of interest" description="Disordered" evidence="2">
    <location>
        <begin position="1"/>
        <end position="46"/>
    </location>
</feature>
<feature type="compositionally biased region" description="Low complexity" evidence="2">
    <location>
        <begin position="25"/>
        <end position="42"/>
    </location>
</feature>
<feature type="active site" description="Phosphohistidine intermediate" evidence="1">
    <location>
        <position position="482"/>
    </location>
</feature>
<feature type="binding site" evidence="1">
    <location>
        <position position="90"/>
    </location>
    <ligand>
        <name>ATP</name>
        <dbReference type="ChEBI" id="CHEBI:30616"/>
    </ligand>
</feature>
<feature type="binding site" evidence="1">
    <location>
        <position position="422"/>
    </location>
    <ligand>
        <name>Mg(2+)</name>
        <dbReference type="ChEBI" id="CHEBI:18420"/>
    </ligand>
</feature>
<feature type="binding site" evidence="1">
    <location>
        <position position="452"/>
    </location>
    <ligand>
        <name>Mg(2+)</name>
        <dbReference type="ChEBI" id="CHEBI:18420"/>
    </ligand>
</feature>
<feature type="binding site" evidence="1">
    <location>
        <position position="515"/>
    </location>
    <ligand>
        <name>ATP</name>
        <dbReference type="ChEBI" id="CHEBI:30616"/>
    </ligand>
</feature>
<feature type="binding site" evidence="1">
    <location>
        <position position="611"/>
    </location>
    <ligand>
        <name>ATP</name>
        <dbReference type="ChEBI" id="CHEBI:30616"/>
    </ligand>
</feature>
<feature type="binding site" evidence="1">
    <location>
        <position position="639"/>
    </location>
    <ligand>
        <name>ATP</name>
        <dbReference type="ChEBI" id="CHEBI:30616"/>
    </ligand>
</feature>
<comment type="function">
    <text evidence="1">Catalyzes the reversible transfer of the terminal phosphate of ATP to form a long-chain polyphosphate (polyP).</text>
</comment>
<comment type="catalytic activity">
    <reaction evidence="1">
        <text>[phosphate](n) + ATP = [phosphate](n+1) + ADP</text>
        <dbReference type="Rhea" id="RHEA:19573"/>
        <dbReference type="Rhea" id="RHEA-COMP:9859"/>
        <dbReference type="Rhea" id="RHEA-COMP:14280"/>
        <dbReference type="ChEBI" id="CHEBI:16838"/>
        <dbReference type="ChEBI" id="CHEBI:30616"/>
        <dbReference type="ChEBI" id="CHEBI:456216"/>
        <dbReference type="EC" id="2.7.4.1"/>
    </reaction>
</comment>
<comment type="cofactor">
    <cofactor evidence="1">
        <name>Mg(2+)</name>
        <dbReference type="ChEBI" id="CHEBI:18420"/>
    </cofactor>
</comment>
<comment type="PTM">
    <text evidence="1">An intermediate of this reaction is the autophosphorylated ppk in which a phosphate is covalently linked to a histidine residue through a N-P bond.</text>
</comment>
<comment type="similarity">
    <text evidence="1">Belongs to the polyphosphate kinase 1 (PPK1) family.</text>
</comment>
<dbReference type="EC" id="2.7.4.1" evidence="1"/>
<dbReference type="EMBL" id="CP000656">
    <property type="protein sequence ID" value="ABP46692.1"/>
    <property type="molecule type" value="Genomic_DNA"/>
</dbReference>
<dbReference type="SMR" id="A4TE29"/>
<dbReference type="STRING" id="350054.Mflv_4223"/>
<dbReference type="KEGG" id="mgi:Mflv_4223"/>
<dbReference type="eggNOG" id="COG0855">
    <property type="taxonomic scope" value="Bacteria"/>
</dbReference>
<dbReference type="HOGENOM" id="CLU_009678_5_0_11"/>
<dbReference type="OrthoDB" id="9761456at2"/>
<dbReference type="GO" id="GO:0009358">
    <property type="term" value="C:polyphosphate kinase complex"/>
    <property type="evidence" value="ECO:0007669"/>
    <property type="project" value="InterPro"/>
</dbReference>
<dbReference type="GO" id="GO:0005524">
    <property type="term" value="F:ATP binding"/>
    <property type="evidence" value="ECO:0007669"/>
    <property type="project" value="UniProtKB-KW"/>
</dbReference>
<dbReference type="GO" id="GO:0046872">
    <property type="term" value="F:metal ion binding"/>
    <property type="evidence" value="ECO:0007669"/>
    <property type="project" value="UniProtKB-KW"/>
</dbReference>
<dbReference type="GO" id="GO:0008976">
    <property type="term" value="F:polyphosphate kinase activity"/>
    <property type="evidence" value="ECO:0007669"/>
    <property type="project" value="UniProtKB-UniRule"/>
</dbReference>
<dbReference type="GO" id="GO:0006799">
    <property type="term" value="P:polyphosphate biosynthetic process"/>
    <property type="evidence" value="ECO:0007669"/>
    <property type="project" value="UniProtKB-UniRule"/>
</dbReference>
<dbReference type="CDD" id="cd09165">
    <property type="entry name" value="PLDc_PaPPK1_C1_like"/>
    <property type="match status" value="1"/>
</dbReference>
<dbReference type="CDD" id="cd09168">
    <property type="entry name" value="PLDc_PaPPK1_C2_like"/>
    <property type="match status" value="1"/>
</dbReference>
<dbReference type="FunFam" id="3.30.870.10:FF:000001">
    <property type="entry name" value="Polyphosphate kinase"/>
    <property type="match status" value="1"/>
</dbReference>
<dbReference type="Gene3D" id="3.30.870.10">
    <property type="entry name" value="Endonuclease Chain A"/>
    <property type="match status" value="2"/>
</dbReference>
<dbReference type="Gene3D" id="3.30.1840.10">
    <property type="entry name" value="Polyphosphate kinase middle domain"/>
    <property type="match status" value="1"/>
</dbReference>
<dbReference type="Gene3D" id="1.20.58.310">
    <property type="entry name" value="Polyphosphate kinase N-terminal domain"/>
    <property type="match status" value="1"/>
</dbReference>
<dbReference type="HAMAP" id="MF_00347">
    <property type="entry name" value="Polyphosphate_kinase"/>
    <property type="match status" value="1"/>
</dbReference>
<dbReference type="InterPro" id="IPR003414">
    <property type="entry name" value="PP_kinase"/>
</dbReference>
<dbReference type="InterPro" id="IPR041108">
    <property type="entry name" value="PP_kinase_C_1"/>
</dbReference>
<dbReference type="InterPro" id="IPR024953">
    <property type="entry name" value="PP_kinase_middle"/>
</dbReference>
<dbReference type="InterPro" id="IPR036830">
    <property type="entry name" value="PP_kinase_middle_dom_sf"/>
</dbReference>
<dbReference type="InterPro" id="IPR025200">
    <property type="entry name" value="PPK_C_dom2"/>
</dbReference>
<dbReference type="InterPro" id="IPR025198">
    <property type="entry name" value="PPK_N_dom"/>
</dbReference>
<dbReference type="InterPro" id="IPR036832">
    <property type="entry name" value="PPK_N_dom_sf"/>
</dbReference>
<dbReference type="NCBIfam" id="TIGR03705">
    <property type="entry name" value="poly_P_kin"/>
    <property type="match status" value="1"/>
</dbReference>
<dbReference type="NCBIfam" id="NF003917">
    <property type="entry name" value="PRK05443.1-1"/>
    <property type="match status" value="1"/>
</dbReference>
<dbReference type="NCBIfam" id="NF003918">
    <property type="entry name" value="PRK05443.1-2"/>
    <property type="match status" value="1"/>
</dbReference>
<dbReference type="NCBIfam" id="NF003921">
    <property type="entry name" value="PRK05443.2-2"/>
    <property type="match status" value="1"/>
</dbReference>
<dbReference type="NCBIfam" id="NF003922">
    <property type="entry name" value="PRK05443.2-3"/>
    <property type="match status" value="1"/>
</dbReference>
<dbReference type="PANTHER" id="PTHR30218">
    <property type="entry name" value="POLYPHOSPHATE KINASE"/>
    <property type="match status" value="1"/>
</dbReference>
<dbReference type="PANTHER" id="PTHR30218:SF0">
    <property type="entry name" value="POLYPHOSPHATE KINASE"/>
    <property type="match status" value="1"/>
</dbReference>
<dbReference type="Pfam" id="PF02503">
    <property type="entry name" value="PP_kinase"/>
    <property type="match status" value="1"/>
</dbReference>
<dbReference type="Pfam" id="PF13090">
    <property type="entry name" value="PP_kinase_C"/>
    <property type="match status" value="1"/>
</dbReference>
<dbReference type="Pfam" id="PF17941">
    <property type="entry name" value="PP_kinase_C_1"/>
    <property type="match status" value="1"/>
</dbReference>
<dbReference type="Pfam" id="PF13089">
    <property type="entry name" value="PP_kinase_N"/>
    <property type="match status" value="1"/>
</dbReference>
<dbReference type="PIRSF" id="PIRSF015589">
    <property type="entry name" value="PP_kinase"/>
    <property type="match status" value="1"/>
</dbReference>
<dbReference type="SUPFAM" id="SSF56024">
    <property type="entry name" value="Phospholipase D/nuclease"/>
    <property type="match status" value="2"/>
</dbReference>
<dbReference type="SUPFAM" id="SSF143724">
    <property type="entry name" value="PHP14-like"/>
    <property type="match status" value="1"/>
</dbReference>
<dbReference type="SUPFAM" id="SSF140356">
    <property type="entry name" value="PPK N-terminal domain-like"/>
    <property type="match status" value="1"/>
</dbReference>
<protein>
    <recommendedName>
        <fullName evidence="1">Polyphosphate kinase</fullName>
        <ecNumber evidence="1">2.7.4.1</ecNumber>
    </recommendedName>
    <alternativeName>
        <fullName evidence="1">ATP-polyphosphate phosphotransferase</fullName>
    </alternativeName>
    <alternativeName>
        <fullName evidence="1">Polyphosphoric acid kinase</fullName>
    </alternativeName>
</protein>
<evidence type="ECO:0000255" key="1">
    <source>
        <dbReference type="HAMAP-Rule" id="MF_00347"/>
    </source>
</evidence>
<evidence type="ECO:0000256" key="2">
    <source>
        <dbReference type="SAM" id="MobiDB-lite"/>
    </source>
</evidence>
<proteinExistence type="inferred from homology"/>
<gene>
    <name evidence="1" type="primary">ppk</name>
    <name type="ordered locus">Mflv_4223</name>
</gene>
<reference key="1">
    <citation type="submission" date="2007-04" db="EMBL/GenBank/DDBJ databases">
        <title>Complete sequence of chromosome of Mycobacterium gilvum PYR-GCK.</title>
        <authorList>
            <consortium name="US DOE Joint Genome Institute"/>
            <person name="Copeland A."/>
            <person name="Lucas S."/>
            <person name="Lapidus A."/>
            <person name="Barry K."/>
            <person name="Detter J.C."/>
            <person name="Glavina del Rio T."/>
            <person name="Hammon N."/>
            <person name="Israni S."/>
            <person name="Dalin E."/>
            <person name="Tice H."/>
            <person name="Pitluck S."/>
            <person name="Chain P."/>
            <person name="Malfatti S."/>
            <person name="Shin M."/>
            <person name="Vergez L."/>
            <person name="Schmutz J."/>
            <person name="Larimer F."/>
            <person name="Land M."/>
            <person name="Hauser L."/>
            <person name="Kyrpides N."/>
            <person name="Mikhailova N."/>
            <person name="Miller C."/>
            <person name="Richardson P."/>
        </authorList>
    </citation>
    <scope>NUCLEOTIDE SEQUENCE [LARGE SCALE GENOMIC DNA]</scope>
    <source>
        <strain>PYR-GCK</strain>
    </source>
</reference>
<sequence length="729" mass="81242">MTEAQTRTEPSESSESSEAVAPAITSAADSAPEAPPATTAPAIENPLPEDRYLNRELSWLDFNARVLALAADPSLPLLERAKFLAIFASNLDEFYMVRVAGLKRRDEMGLSVRSADGLSPREQLRRISERTQQIASRHAHVFLDSVRPALADEGIVIVTWAQLDDAERAKLSTYFHEQVFPVLTPLAVDPAHPFPFVSGLSLNLAITVKHPDDGGQHFARIKVPDNVDRFVELPARGDSPGVVRFLPMEELIAAFLTVLFPGLEIVEHHAFRITRNADFEVEEDRDEDLLQALERELARRRFGSPVRLEVSDDMTESMLELLLRELDVAPGDVVEVPGLLDLSSLWQIYSVDRPGLKDPPFVPATPSAFGERETPKSIFSALRDGDVLVHHPYDSFSTTVQRFIEQAAADPNVLAIKQTLYRTSGDSPIVNALIDAAEAGKQVVALVEIKARFDEQANIKWARALEQAGVHVVYGLIGLKTHCKTCLVVRREGSTIRRYCHIGTGNYNPKTARLYEDIGLLTAAPDIGADLTDLFNSLTGYSRKESYRNLLVAPYGVRRGIIERIDREIAATRDGAEGRIRLKANALVDEQVIDALYRASQAGVQVEVVVRGICALRPGEPGFSDNITVRSILGRFLEHSRIIHFRAIDEYWIGSADMMHRNLDRRVEVMAQVKDPRLTTQLNDIFDSAADPRTRCWELGSDGHWTALPQEGHSVRDHQISLMERRRHP</sequence>
<organism>
    <name type="scientific">Mycolicibacterium gilvum (strain PYR-GCK)</name>
    <name type="common">Mycobacterium gilvum (strain PYR-GCK)</name>
    <dbReference type="NCBI Taxonomy" id="350054"/>
    <lineage>
        <taxon>Bacteria</taxon>
        <taxon>Bacillati</taxon>
        <taxon>Actinomycetota</taxon>
        <taxon>Actinomycetes</taxon>
        <taxon>Mycobacteriales</taxon>
        <taxon>Mycobacteriaceae</taxon>
        <taxon>Mycolicibacterium</taxon>
    </lineage>
</organism>